<feature type="signal peptide" evidence="3">
    <location>
        <begin position="1"/>
        <end position="20"/>
    </location>
</feature>
<feature type="chain" id="PRO_0000032756" description="Osteomodulin">
    <location>
        <begin position="21"/>
        <end position="423"/>
    </location>
</feature>
<feature type="domain" description="LRRNT">
    <location>
        <begin position="53"/>
        <end position="91"/>
    </location>
</feature>
<feature type="repeat" description="LRR 1">
    <location>
        <begin position="92"/>
        <end position="113"/>
    </location>
</feature>
<feature type="repeat" description="LRR 2">
    <location>
        <begin position="116"/>
        <end position="129"/>
    </location>
</feature>
<feature type="repeat" description="LRR 3">
    <location>
        <begin position="142"/>
        <end position="164"/>
    </location>
</feature>
<feature type="repeat" description="LRR 4">
    <location>
        <begin position="165"/>
        <end position="184"/>
    </location>
</feature>
<feature type="repeat" description="LRR 5">
    <location>
        <begin position="187"/>
        <end position="207"/>
    </location>
</feature>
<feature type="repeat" description="LRR 6">
    <location>
        <begin position="213"/>
        <end position="233"/>
    </location>
</feature>
<feature type="repeat" description="LRR 7">
    <location>
        <begin position="234"/>
        <end position="255"/>
    </location>
</feature>
<feature type="repeat" description="LRR 8">
    <location>
        <begin position="258"/>
        <end position="279"/>
    </location>
</feature>
<feature type="repeat" description="LRR 9">
    <location>
        <begin position="281"/>
        <end position="294"/>
    </location>
</feature>
<feature type="repeat" description="LRR 10">
    <location>
        <begin position="301"/>
        <end position="322"/>
    </location>
</feature>
<feature type="repeat" description="LRR 11">
    <location>
        <begin position="331"/>
        <end position="353"/>
    </location>
</feature>
<feature type="region of interest" description="Disordered" evidence="4">
    <location>
        <begin position="383"/>
        <end position="408"/>
    </location>
</feature>
<feature type="compositionally biased region" description="Acidic residues" evidence="4">
    <location>
        <begin position="385"/>
        <end position="394"/>
    </location>
</feature>
<feature type="modified residue" description="Sulfotyrosine" evidence="1">
    <location>
        <position position="22"/>
    </location>
</feature>
<feature type="modified residue" description="Sulfotyrosine" evidence="1">
    <location>
        <position position="25"/>
    </location>
</feature>
<feature type="modified residue" description="Sulfotyrosine" evidence="1">
    <location>
        <position position="31"/>
    </location>
</feature>
<feature type="modified residue" description="Sulfotyrosine" evidence="1">
    <location>
        <position position="39"/>
    </location>
</feature>
<feature type="modified residue" description="Sulfotyrosine" evidence="1">
    <location>
        <position position="51"/>
    </location>
</feature>
<feature type="modified residue" description="Sulfotyrosine" evidence="1">
    <location>
        <position position="77"/>
    </location>
</feature>
<feature type="modified residue" description="Sulfotyrosine" evidence="1">
    <location>
        <position position="413"/>
    </location>
</feature>
<feature type="modified residue" description="Sulfotyrosine" evidence="1">
    <location>
        <position position="414"/>
    </location>
</feature>
<feature type="glycosylation site" description="N-linked (GlcNAc...) asparagine" evidence="3">
    <location>
        <position position="113"/>
    </location>
</feature>
<feature type="glycosylation site" description="N-linked (GlcNAc...) asparagine" evidence="3">
    <location>
        <position position="121"/>
    </location>
</feature>
<feature type="glycosylation site" description="N-linked (GlcNAc...) asparagine" evidence="3">
    <location>
        <position position="187"/>
    </location>
</feature>
<feature type="glycosylation site" description="N-linked (GlcNAc...) asparagine" evidence="3">
    <location>
        <position position="242"/>
    </location>
</feature>
<feature type="glycosylation site" description="N-linked (GlcNAc...) asparagine" evidence="3">
    <location>
        <position position="278"/>
    </location>
</feature>
<feature type="glycosylation site" description="N-linked (GlcNAc...) asparagine" evidence="3">
    <location>
        <position position="316"/>
    </location>
</feature>
<feature type="disulfide bond" evidence="1">
    <location>
        <begin position="321"/>
        <end position="353"/>
    </location>
</feature>
<proteinExistence type="evidence at transcript level"/>
<name>OMD_RAT</name>
<dbReference type="EMBL" id="AF104362">
    <property type="protein sequence ID" value="AAD04570.1"/>
    <property type="molecule type" value="mRNA"/>
</dbReference>
<dbReference type="SMR" id="Q9Z1S7"/>
<dbReference type="FunCoup" id="Q9Z1S7">
    <property type="interactions" value="7"/>
</dbReference>
<dbReference type="STRING" id="10116.ENSRNOP00000020648"/>
<dbReference type="GlyCosmos" id="Q9Z1S7">
    <property type="glycosylation" value="6 sites, No reported glycans"/>
</dbReference>
<dbReference type="GlyGen" id="Q9Z1S7">
    <property type="glycosylation" value="6 sites"/>
</dbReference>
<dbReference type="PhosphoSitePlus" id="Q9Z1S7"/>
<dbReference type="PaxDb" id="10116-ENSRNOP00000020648"/>
<dbReference type="AGR" id="RGD:621818"/>
<dbReference type="RGD" id="621818">
    <property type="gene designation" value="Omd"/>
</dbReference>
<dbReference type="eggNOG" id="KOG0619">
    <property type="taxonomic scope" value="Eukaryota"/>
</dbReference>
<dbReference type="InParanoid" id="Q9Z1S7"/>
<dbReference type="PhylomeDB" id="Q9Z1S7"/>
<dbReference type="Reactome" id="R-RNO-2022854">
    <property type="pathway name" value="Keratan sulfate biosynthesis"/>
</dbReference>
<dbReference type="Reactome" id="R-RNO-2022857">
    <property type="pathway name" value="Keratan sulfate degradation"/>
</dbReference>
<dbReference type="PRO" id="PR:Q9Z1S7"/>
<dbReference type="Proteomes" id="UP000002494">
    <property type="component" value="Unplaced"/>
</dbReference>
<dbReference type="GO" id="GO:0031012">
    <property type="term" value="C:extracellular matrix"/>
    <property type="evidence" value="ECO:0000266"/>
    <property type="project" value="RGD"/>
</dbReference>
<dbReference type="GO" id="GO:0005615">
    <property type="term" value="C:extracellular space"/>
    <property type="evidence" value="ECO:0000318"/>
    <property type="project" value="GO_Central"/>
</dbReference>
<dbReference type="GO" id="GO:0007155">
    <property type="term" value="P:cell adhesion"/>
    <property type="evidence" value="ECO:0007669"/>
    <property type="project" value="UniProtKB-KW"/>
</dbReference>
<dbReference type="GO" id="GO:0030500">
    <property type="term" value="P:regulation of bone mineralization"/>
    <property type="evidence" value="ECO:0000303"/>
    <property type="project" value="RGD"/>
</dbReference>
<dbReference type="FunFam" id="3.80.10.10:FF:000455">
    <property type="entry name" value="Osteomodulin"/>
    <property type="match status" value="1"/>
</dbReference>
<dbReference type="Gene3D" id="3.80.10.10">
    <property type="entry name" value="Ribonuclease Inhibitor"/>
    <property type="match status" value="3"/>
</dbReference>
<dbReference type="InterPro" id="IPR001611">
    <property type="entry name" value="Leu-rich_rpt"/>
</dbReference>
<dbReference type="InterPro" id="IPR003591">
    <property type="entry name" value="Leu-rich_rpt_typical-subtyp"/>
</dbReference>
<dbReference type="InterPro" id="IPR032675">
    <property type="entry name" value="LRR_dom_sf"/>
</dbReference>
<dbReference type="InterPro" id="IPR000372">
    <property type="entry name" value="LRRNT"/>
</dbReference>
<dbReference type="InterPro" id="IPR050333">
    <property type="entry name" value="SLRP"/>
</dbReference>
<dbReference type="PANTHER" id="PTHR45712">
    <property type="entry name" value="AGAP008170-PA"/>
    <property type="match status" value="1"/>
</dbReference>
<dbReference type="PANTHER" id="PTHR45712:SF3">
    <property type="entry name" value="OSTEOMODULIN"/>
    <property type="match status" value="1"/>
</dbReference>
<dbReference type="Pfam" id="PF13855">
    <property type="entry name" value="LRR_8"/>
    <property type="match status" value="3"/>
</dbReference>
<dbReference type="Pfam" id="PF01462">
    <property type="entry name" value="LRRNT"/>
    <property type="match status" value="1"/>
</dbReference>
<dbReference type="SMART" id="SM00364">
    <property type="entry name" value="LRR_BAC"/>
    <property type="match status" value="5"/>
</dbReference>
<dbReference type="SMART" id="SM00369">
    <property type="entry name" value="LRR_TYP"/>
    <property type="match status" value="8"/>
</dbReference>
<dbReference type="SMART" id="SM00013">
    <property type="entry name" value="LRRNT"/>
    <property type="match status" value="1"/>
</dbReference>
<dbReference type="SUPFAM" id="SSF52058">
    <property type="entry name" value="L domain-like"/>
    <property type="match status" value="1"/>
</dbReference>
<dbReference type="PROSITE" id="PS51450">
    <property type="entry name" value="LRR"/>
    <property type="match status" value="8"/>
</dbReference>
<sequence>MGCLRPIYVLFFCFVVRVYGQYEAYQWDEDYEQEPSEDYEPEFQFHQNIEYGAPFYQNILGCAKECFCPTNFPTSMYCDNRKLKTIPDIPMHIQQLNLQFNDIEAVTADSFINATHLKEINLSHNKIKSQKIDYGVFAKLSNLQQLHLDHNNLEEFPFPLPKSLERLLLGYNEISTLPTHAMDGLVNVTMLDLCYNHLSDSTLKGKILSKLEKLMQLNLCNNRLESMPPGLPLSLMYLSLENNSISSIPEDYFQKLPKLHALRISHNKLEDIPYDIFNLSNLIELNVGHNKLKQAFYIPRNLEHLYLQNNEIQSINVTMMCPSLDPLHHHHLTYLRVDQNKLKEPISSYIFFCFPRIHSIYYGEQRSTNGETIQLKTQVFRRYQDEEEEEEDDSQDHTLEGQEETEEHFNSHYYEMQAWQNTI</sequence>
<reference key="1">
    <citation type="journal article" date="1999" name="Matrix Biol.">
        <title>Tissue distribution of a novel cell binding protein, osteoadherin, in the rat.</title>
        <authorList>
            <person name="Shen Z."/>
            <person name="Gantcheva S."/>
            <person name="Sommarin Y."/>
            <person name="Heinegaard D."/>
        </authorList>
    </citation>
    <scope>NUCLEOTIDE SEQUENCE [MRNA]</scope>
    <scope>TISSUE SPECIFICITY</scope>
    <scope>DEVELOPMENTAL STAGE</scope>
    <source>
        <tissue>Calvaria</tissue>
    </source>
</reference>
<gene>
    <name type="primary">Omd</name>
</gene>
<keyword id="KW-0130">Cell adhesion</keyword>
<keyword id="KW-1015">Disulfide bond</keyword>
<keyword id="KW-0272">Extracellular matrix</keyword>
<keyword id="KW-0325">Glycoprotein</keyword>
<keyword id="KW-0433">Leucine-rich repeat</keyword>
<keyword id="KW-0654">Proteoglycan</keyword>
<keyword id="KW-1185">Reference proteome</keyword>
<keyword id="KW-0677">Repeat</keyword>
<keyword id="KW-0964">Secreted</keyword>
<keyword id="KW-0732">Signal</keyword>
<keyword id="KW-0765">Sulfation</keyword>
<accession>Q9Z1S7</accession>
<organism>
    <name type="scientific">Rattus norvegicus</name>
    <name type="common">Rat</name>
    <dbReference type="NCBI Taxonomy" id="10116"/>
    <lineage>
        <taxon>Eukaryota</taxon>
        <taxon>Metazoa</taxon>
        <taxon>Chordata</taxon>
        <taxon>Craniata</taxon>
        <taxon>Vertebrata</taxon>
        <taxon>Euteleostomi</taxon>
        <taxon>Mammalia</taxon>
        <taxon>Eutheria</taxon>
        <taxon>Euarchontoglires</taxon>
        <taxon>Glires</taxon>
        <taxon>Rodentia</taxon>
        <taxon>Myomorpha</taxon>
        <taxon>Muroidea</taxon>
        <taxon>Muridae</taxon>
        <taxon>Murinae</taxon>
        <taxon>Rattus</taxon>
    </lineage>
</organism>
<protein>
    <recommendedName>
        <fullName>Osteomodulin</fullName>
    </recommendedName>
    <alternativeName>
        <fullName>Keratan sulfate proteoglycan osteomodulin</fullName>
        <shortName>KSPG osteomodulin</shortName>
    </alternativeName>
    <alternativeName>
        <fullName>Osteoadherin</fullName>
        <shortName>OSAD</shortName>
    </alternativeName>
</protein>
<comment type="function">
    <text evidence="2">May be implicated in biomineralization processes. Has a function in binding of osteoblasts via the alpha(V)beta(3)-integrin.</text>
</comment>
<comment type="subunit">
    <text evidence="2">Binds the alpha(V)beta(3)-integrin.</text>
</comment>
<comment type="subcellular location">
    <subcellularLocation>
        <location evidence="1">Secreted</location>
        <location evidence="1">Extracellular space</location>
        <location evidence="1">Extracellular matrix</location>
    </subcellularLocation>
</comment>
<comment type="tissue specificity">
    <text evidence="5">Osteoblast and odontoblast. Expressed in femoral bone and calvaria tissues. Detected in femoral head, rib, tendon and bone marrow.</text>
</comment>
<comment type="developmental stage">
    <text evidence="5">In developing molars, it was first detected in alveolar bone in 19-day-old embryos. In more mature teeth (newborn and 2-day-old rats), the expression starts in the polarized odontoblasts and increases in the secretory and mature odontoblasts.</text>
</comment>
<comment type="PTM">
    <text evidence="2">Glycosylated; contains keratan sulfate.</text>
</comment>
<comment type="similarity">
    <text evidence="6">Belongs to the small leucine-rich proteoglycan (SLRP) family. SLRP class II subfamily.</text>
</comment>
<evidence type="ECO:0000250" key="1"/>
<evidence type="ECO:0000250" key="2">
    <source>
        <dbReference type="UniProtKB" id="O77742"/>
    </source>
</evidence>
<evidence type="ECO:0000255" key="3"/>
<evidence type="ECO:0000256" key="4">
    <source>
        <dbReference type="SAM" id="MobiDB-lite"/>
    </source>
</evidence>
<evidence type="ECO:0000269" key="5">
    <source>
    </source>
</evidence>
<evidence type="ECO:0000305" key="6"/>